<sequence length="372" mass="39877">MSAFVNIDAQRIPVALSHQPYEVVIGGEGLRGVGKELRRAGLKEGIKVLVVSNADVAEPYGDLCLQSLSDSGYRPTLLVIEAGEDQKTPVSVALIHDAAYEAKLERGSLMVALGGGVVGDMTGFAAATWLRGISVVQLPTTLLAMVDAAIGGKTGVNHPGGKNLIGAFHQPRLVLIDPSTLNTLPEREFRAGMAEVIKYGVIGDAALFQLLEGIPELNTPSQLHADLLEKILERSALAKSRVVSSDEREGGLRAILNYGHTFGHVVETLCGYGTWLHGEAVAIGMVAVGELAVLRQSWNRDDANRQKSLIAKAGLPIAWPKLDPEEVLYTLQGDKKVKDGKLRFVIPTGIGNVEIKNDVSREEIRKCLSELS</sequence>
<organism>
    <name type="scientific">Prochlorococcus marinus (strain MIT 9303)</name>
    <dbReference type="NCBI Taxonomy" id="59922"/>
    <lineage>
        <taxon>Bacteria</taxon>
        <taxon>Bacillati</taxon>
        <taxon>Cyanobacteriota</taxon>
        <taxon>Cyanophyceae</taxon>
        <taxon>Synechococcales</taxon>
        <taxon>Prochlorococcaceae</taxon>
        <taxon>Prochlorococcus</taxon>
    </lineage>
</organism>
<proteinExistence type="inferred from homology"/>
<protein>
    <recommendedName>
        <fullName evidence="1">3-dehydroquinate synthase</fullName>
        <shortName evidence="1">DHQS</shortName>
        <ecNumber evidence="1">4.2.3.4</ecNumber>
    </recommendedName>
</protein>
<reference key="1">
    <citation type="journal article" date="2007" name="PLoS Genet.">
        <title>Patterns and implications of gene gain and loss in the evolution of Prochlorococcus.</title>
        <authorList>
            <person name="Kettler G.C."/>
            <person name="Martiny A.C."/>
            <person name="Huang K."/>
            <person name="Zucker J."/>
            <person name="Coleman M.L."/>
            <person name="Rodrigue S."/>
            <person name="Chen F."/>
            <person name="Lapidus A."/>
            <person name="Ferriera S."/>
            <person name="Johnson J."/>
            <person name="Steglich C."/>
            <person name="Church G.M."/>
            <person name="Richardson P."/>
            <person name="Chisholm S.W."/>
        </authorList>
    </citation>
    <scope>NUCLEOTIDE SEQUENCE [LARGE SCALE GENOMIC DNA]</scope>
    <source>
        <strain>MIT 9303</strain>
    </source>
</reference>
<dbReference type="EC" id="4.2.3.4" evidence="1"/>
<dbReference type="EMBL" id="CP000554">
    <property type="protein sequence ID" value="ABM78301.1"/>
    <property type="molecule type" value="Genomic_DNA"/>
</dbReference>
<dbReference type="RefSeq" id="WP_011826192.1">
    <property type="nucleotide sequence ID" value="NC_008820.1"/>
</dbReference>
<dbReference type="SMR" id="A2C9Z1"/>
<dbReference type="STRING" id="59922.P9303_15571"/>
<dbReference type="KEGG" id="pmf:P9303_15571"/>
<dbReference type="HOGENOM" id="CLU_001201_0_2_3"/>
<dbReference type="BioCyc" id="PMAR59922:G1G80-1352-MONOMER"/>
<dbReference type="UniPathway" id="UPA00053">
    <property type="reaction ID" value="UER00085"/>
</dbReference>
<dbReference type="Proteomes" id="UP000002274">
    <property type="component" value="Chromosome"/>
</dbReference>
<dbReference type="GO" id="GO:0005737">
    <property type="term" value="C:cytoplasm"/>
    <property type="evidence" value="ECO:0007669"/>
    <property type="project" value="UniProtKB-SubCell"/>
</dbReference>
<dbReference type="GO" id="GO:0003856">
    <property type="term" value="F:3-dehydroquinate synthase activity"/>
    <property type="evidence" value="ECO:0007669"/>
    <property type="project" value="UniProtKB-UniRule"/>
</dbReference>
<dbReference type="GO" id="GO:0046872">
    <property type="term" value="F:metal ion binding"/>
    <property type="evidence" value="ECO:0007669"/>
    <property type="project" value="UniProtKB-KW"/>
</dbReference>
<dbReference type="GO" id="GO:0000166">
    <property type="term" value="F:nucleotide binding"/>
    <property type="evidence" value="ECO:0007669"/>
    <property type="project" value="UniProtKB-KW"/>
</dbReference>
<dbReference type="GO" id="GO:0008652">
    <property type="term" value="P:amino acid biosynthetic process"/>
    <property type="evidence" value="ECO:0007669"/>
    <property type="project" value="UniProtKB-KW"/>
</dbReference>
<dbReference type="GO" id="GO:0009073">
    <property type="term" value="P:aromatic amino acid family biosynthetic process"/>
    <property type="evidence" value="ECO:0007669"/>
    <property type="project" value="UniProtKB-KW"/>
</dbReference>
<dbReference type="GO" id="GO:0009423">
    <property type="term" value="P:chorismate biosynthetic process"/>
    <property type="evidence" value="ECO:0007669"/>
    <property type="project" value="UniProtKB-UniRule"/>
</dbReference>
<dbReference type="CDD" id="cd08195">
    <property type="entry name" value="DHQS"/>
    <property type="match status" value="1"/>
</dbReference>
<dbReference type="FunFam" id="3.40.50.1970:FF:000007">
    <property type="entry name" value="Pentafunctional AROM polypeptide"/>
    <property type="match status" value="1"/>
</dbReference>
<dbReference type="Gene3D" id="3.40.50.1970">
    <property type="match status" value="1"/>
</dbReference>
<dbReference type="Gene3D" id="1.20.1090.10">
    <property type="entry name" value="Dehydroquinate synthase-like - alpha domain"/>
    <property type="match status" value="1"/>
</dbReference>
<dbReference type="HAMAP" id="MF_00110">
    <property type="entry name" value="DHQ_synthase"/>
    <property type="match status" value="1"/>
</dbReference>
<dbReference type="InterPro" id="IPR050071">
    <property type="entry name" value="Dehydroquinate_synthase"/>
</dbReference>
<dbReference type="InterPro" id="IPR016037">
    <property type="entry name" value="DHQ_synth_AroB"/>
</dbReference>
<dbReference type="InterPro" id="IPR030963">
    <property type="entry name" value="DHQ_synth_fam"/>
</dbReference>
<dbReference type="InterPro" id="IPR030960">
    <property type="entry name" value="DHQS/DOIS_N"/>
</dbReference>
<dbReference type="InterPro" id="IPR056179">
    <property type="entry name" value="DHQS_C"/>
</dbReference>
<dbReference type="NCBIfam" id="TIGR01357">
    <property type="entry name" value="aroB"/>
    <property type="match status" value="1"/>
</dbReference>
<dbReference type="PANTHER" id="PTHR43622">
    <property type="entry name" value="3-DEHYDROQUINATE SYNTHASE"/>
    <property type="match status" value="1"/>
</dbReference>
<dbReference type="PANTHER" id="PTHR43622:SF7">
    <property type="entry name" value="3-DEHYDROQUINATE SYNTHASE, CHLOROPLASTIC"/>
    <property type="match status" value="1"/>
</dbReference>
<dbReference type="Pfam" id="PF01761">
    <property type="entry name" value="DHQ_synthase"/>
    <property type="match status" value="1"/>
</dbReference>
<dbReference type="Pfam" id="PF24621">
    <property type="entry name" value="DHQS_C"/>
    <property type="match status" value="1"/>
</dbReference>
<dbReference type="PIRSF" id="PIRSF001455">
    <property type="entry name" value="DHQ_synth"/>
    <property type="match status" value="1"/>
</dbReference>
<dbReference type="SUPFAM" id="SSF56796">
    <property type="entry name" value="Dehydroquinate synthase-like"/>
    <property type="match status" value="1"/>
</dbReference>
<accession>A2C9Z1</accession>
<gene>
    <name evidence="1" type="primary">aroB</name>
    <name type="ordered locus">P9303_15571</name>
</gene>
<name>AROB_PROM3</name>
<comment type="function">
    <text evidence="1">Catalyzes the conversion of 3-deoxy-D-arabino-heptulosonate 7-phosphate (DAHP) to dehydroquinate (DHQ).</text>
</comment>
<comment type="catalytic activity">
    <reaction evidence="1">
        <text>7-phospho-2-dehydro-3-deoxy-D-arabino-heptonate = 3-dehydroquinate + phosphate</text>
        <dbReference type="Rhea" id="RHEA:21968"/>
        <dbReference type="ChEBI" id="CHEBI:32364"/>
        <dbReference type="ChEBI" id="CHEBI:43474"/>
        <dbReference type="ChEBI" id="CHEBI:58394"/>
        <dbReference type="EC" id="4.2.3.4"/>
    </reaction>
</comment>
<comment type="cofactor">
    <cofactor evidence="1">
        <name>Co(2+)</name>
        <dbReference type="ChEBI" id="CHEBI:48828"/>
    </cofactor>
    <cofactor evidence="1">
        <name>Zn(2+)</name>
        <dbReference type="ChEBI" id="CHEBI:29105"/>
    </cofactor>
    <text evidence="1">Binds 1 divalent metal cation per subunit. Can use either Co(2+) or Zn(2+).</text>
</comment>
<comment type="cofactor">
    <cofactor evidence="1">
        <name>NAD(+)</name>
        <dbReference type="ChEBI" id="CHEBI:57540"/>
    </cofactor>
</comment>
<comment type="pathway">
    <text evidence="1">Metabolic intermediate biosynthesis; chorismate biosynthesis; chorismate from D-erythrose 4-phosphate and phosphoenolpyruvate: step 2/7.</text>
</comment>
<comment type="subcellular location">
    <subcellularLocation>
        <location evidence="1">Cytoplasm</location>
    </subcellularLocation>
</comment>
<comment type="similarity">
    <text evidence="1">Belongs to the sugar phosphate cyclases superfamily. Dehydroquinate synthase family.</text>
</comment>
<keyword id="KW-0028">Amino-acid biosynthesis</keyword>
<keyword id="KW-0057">Aromatic amino acid biosynthesis</keyword>
<keyword id="KW-0170">Cobalt</keyword>
<keyword id="KW-0963">Cytoplasm</keyword>
<keyword id="KW-0456">Lyase</keyword>
<keyword id="KW-0479">Metal-binding</keyword>
<keyword id="KW-0520">NAD</keyword>
<keyword id="KW-0547">Nucleotide-binding</keyword>
<keyword id="KW-0862">Zinc</keyword>
<feature type="chain" id="PRO_1000094563" description="3-dehydroquinate synthase">
    <location>
        <begin position="1"/>
        <end position="372"/>
    </location>
</feature>
<feature type="binding site" evidence="1">
    <location>
        <begin position="116"/>
        <end position="120"/>
    </location>
    <ligand>
        <name>NAD(+)</name>
        <dbReference type="ChEBI" id="CHEBI:57540"/>
    </ligand>
</feature>
<feature type="binding site" evidence="1">
    <location>
        <begin position="140"/>
        <end position="141"/>
    </location>
    <ligand>
        <name>NAD(+)</name>
        <dbReference type="ChEBI" id="CHEBI:57540"/>
    </ligand>
</feature>
<feature type="binding site" evidence="1">
    <location>
        <position position="153"/>
    </location>
    <ligand>
        <name>NAD(+)</name>
        <dbReference type="ChEBI" id="CHEBI:57540"/>
    </ligand>
</feature>
<feature type="binding site" evidence="1">
    <location>
        <position position="162"/>
    </location>
    <ligand>
        <name>NAD(+)</name>
        <dbReference type="ChEBI" id="CHEBI:57540"/>
    </ligand>
</feature>
<feature type="binding site" evidence="1">
    <location>
        <begin position="180"/>
        <end position="183"/>
    </location>
    <ligand>
        <name>NAD(+)</name>
        <dbReference type="ChEBI" id="CHEBI:57540"/>
    </ligand>
</feature>
<feature type="binding site" evidence="1">
    <location>
        <position position="195"/>
    </location>
    <ligand>
        <name>Zn(2+)</name>
        <dbReference type="ChEBI" id="CHEBI:29105"/>
    </ligand>
</feature>
<feature type="binding site" evidence="1">
    <location>
        <position position="260"/>
    </location>
    <ligand>
        <name>Zn(2+)</name>
        <dbReference type="ChEBI" id="CHEBI:29105"/>
    </ligand>
</feature>
<feature type="binding site" evidence="1">
    <location>
        <position position="277"/>
    </location>
    <ligand>
        <name>Zn(2+)</name>
        <dbReference type="ChEBI" id="CHEBI:29105"/>
    </ligand>
</feature>
<evidence type="ECO:0000255" key="1">
    <source>
        <dbReference type="HAMAP-Rule" id="MF_00110"/>
    </source>
</evidence>